<gene>
    <name type="primary">MYH2</name>
</gene>
<protein>
    <recommendedName>
        <fullName>Myosin-2</fullName>
    </recommendedName>
    <alternativeName>
        <fullName>Myosin heavy chain 2</fullName>
    </alternativeName>
    <alternativeName>
        <fullName>Myosin heavy chain 2a</fullName>
        <shortName>MyHC-2a</shortName>
    </alternativeName>
    <alternativeName>
        <fullName>Myosin heavy chain, skeletal muscle, adult 2</fullName>
    </alternativeName>
</protein>
<feature type="chain" id="PRO_0000274166" description="Myosin-2">
    <location>
        <begin position="1"/>
        <end position="1940"/>
    </location>
</feature>
<feature type="domain" description="Myosin N-terminal SH3-like" evidence="10">
    <location>
        <begin position="33"/>
        <end position="82"/>
    </location>
</feature>
<feature type="domain" description="Myosin motor" evidence="9">
    <location>
        <begin position="86"/>
        <end position="783"/>
    </location>
</feature>
<feature type="domain" description="IQ" evidence="8">
    <location>
        <begin position="786"/>
        <end position="815"/>
    </location>
</feature>
<feature type="region of interest" description="Actin-binding" evidence="1">
    <location>
        <begin position="660"/>
        <end position="682"/>
    </location>
</feature>
<feature type="region of interest" description="Actin-binding" evidence="1">
    <location>
        <begin position="762"/>
        <end position="776"/>
    </location>
</feature>
<feature type="region of interest" description="Disordered" evidence="11">
    <location>
        <begin position="1154"/>
        <end position="1173"/>
    </location>
</feature>
<feature type="region of interest" description="Disordered" evidence="11">
    <location>
        <begin position="1884"/>
        <end position="1920"/>
    </location>
</feature>
<feature type="coiled-coil region" evidence="7">
    <location>
        <begin position="844"/>
        <end position="1940"/>
    </location>
</feature>
<feature type="binding site" evidence="7">
    <location>
        <begin position="179"/>
        <end position="186"/>
    </location>
    <ligand>
        <name>ATP</name>
        <dbReference type="ChEBI" id="CHEBI:30616"/>
    </ligand>
</feature>
<feature type="modified residue" description="Phosphothreonine" evidence="5">
    <location>
        <position position="64"/>
    </location>
</feature>
<feature type="modified residue" description="Phosphothreonine" evidence="5">
    <location>
        <position position="69"/>
    </location>
</feature>
<feature type="modified residue" description="N6,N6,N6-trimethyllysine" evidence="7">
    <location>
        <position position="130"/>
    </location>
</feature>
<feature type="modified residue" description="Phosphotyrosine" evidence="5">
    <location>
        <position position="389"/>
    </location>
</feature>
<feature type="modified residue" description="Phosphoserine" evidence="5">
    <location>
        <position position="392"/>
    </location>
</feature>
<feature type="modified residue" description="Phosphothreonine" evidence="5">
    <location>
        <position position="419"/>
    </location>
</feature>
<feature type="modified residue" description="Phosphoserine" evidence="5">
    <location>
        <position position="625"/>
    </location>
</feature>
<feature type="modified residue" description="Pros-methylhistidine" evidence="4">
    <location>
        <position position="758"/>
    </location>
</feature>
<feature type="modified residue" description="Phosphoserine" evidence="5">
    <location>
        <position position="1093"/>
    </location>
</feature>
<feature type="modified residue" description="Phosphoserine" evidence="5">
    <location>
        <position position="1097"/>
    </location>
</feature>
<feature type="modified residue" description="Phosphoserine" evidence="5">
    <location>
        <position position="1163"/>
    </location>
</feature>
<feature type="modified residue" description="Phosphoserine" evidence="5">
    <location>
        <position position="1238"/>
    </location>
</feature>
<feature type="modified residue" description="Phosphothreonine" evidence="5">
    <location>
        <position position="1242"/>
    </location>
</feature>
<feature type="modified residue" description="Phosphoserine" evidence="5">
    <location>
        <position position="1244"/>
    </location>
</feature>
<feature type="modified residue" description="Phosphothreonine" evidence="5">
    <location>
        <position position="1256"/>
    </location>
</feature>
<feature type="modified residue" description="Phosphoserine" evidence="5">
    <location>
        <position position="1262"/>
    </location>
</feature>
<feature type="modified residue" description="Phosphothreonine" evidence="5">
    <location>
        <position position="1287"/>
    </location>
</feature>
<feature type="modified residue" description="Phosphoserine" evidence="5">
    <location>
        <position position="1289"/>
    </location>
</feature>
<feature type="modified residue" description="Phosphoserine" evidence="5">
    <location>
        <position position="1293"/>
    </location>
</feature>
<feature type="modified residue" description="Phosphoserine" evidence="5">
    <location>
        <position position="1304"/>
    </location>
</feature>
<feature type="modified residue" description="Phosphoserine" evidence="5">
    <location>
        <position position="1307"/>
    </location>
</feature>
<feature type="modified residue" description="Phosphotyrosine" evidence="5">
    <location>
        <position position="1465"/>
    </location>
</feature>
<feature type="modified residue" description="Phosphothreonine" evidence="5">
    <location>
        <position position="1468"/>
    </location>
</feature>
<feature type="modified residue" description="Phosphoserine" evidence="5">
    <location>
        <position position="1475"/>
    </location>
</feature>
<feature type="modified residue" description="Phosphotyrosine" evidence="5">
    <location>
        <position position="1493"/>
    </location>
</feature>
<feature type="modified residue" description="Phosphoserine" evidence="5">
    <location>
        <position position="1496"/>
    </location>
</feature>
<feature type="modified residue" description="Phosphothreonine" evidence="5">
    <location>
        <position position="1502"/>
    </location>
</feature>
<feature type="modified residue" description="Phosphoserine" evidence="5">
    <location>
        <position position="1515"/>
    </location>
</feature>
<feature type="modified residue" description="Phosphothreonine" evidence="5">
    <location>
        <position position="1518"/>
    </location>
</feature>
<feature type="modified residue" description="Phosphoserine" evidence="5">
    <location>
        <position position="1543"/>
    </location>
</feature>
<feature type="modified residue" description="Phosphoserine" evidence="5">
    <location>
        <position position="1555"/>
    </location>
</feature>
<feature type="modified residue" description="Phosphoserine" evidence="5">
    <location>
        <position position="1575"/>
    </location>
</feature>
<feature type="modified residue" description="Phosphoserine" evidence="5">
    <location>
        <position position="1601"/>
    </location>
</feature>
<feature type="modified residue" description="Phosphoserine" evidence="5">
    <location>
        <position position="1715"/>
    </location>
</feature>
<feature type="modified residue" description="Phosphoserine" evidence="5">
    <location>
        <position position="1727"/>
    </location>
</feature>
<feature type="modified residue" description="Phosphothreonine" evidence="5">
    <location>
        <position position="1731"/>
    </location>
</feature>
<feature type="modified residue" description="Phosphothreonine" evidence="5">
    <location>
        <position position="1737"/>
    </location>
</feature>
<feature type="modified residue" description="Phosphoserine" evidence="5">
    <location>
        <position position="1740"/>
    </location>
</feature>
<organism>
    <name type="scientific">Canis lupus familiaris</name>
    <name type="common">Dog</name>
    <name type="synonym">Canis familiaris</name>
    <dbReference type="NCBI Taxonomy" id="9615"/>
    <lineage>
        <taxon>Eukaryota</taxon>
        <taxon>Metazoa</taxon>
        <taxon>Chordata</taxon>
        <taxon>Craniata</taxon>
        <taxon>Vertebrata</taxon>
        <taxon>Euteleostomi</taxon>
        <taxon>Mammalia</taxon>
        <taxon>Eutheria</taxon>
        <taxon>Laurasiatheria</taxon>
        <taxon>Carnivora</taxon>
        <taxon>Caniformia</taxon>
        <taxon>Canidae</taxon>
        <taxon>Canis</taxon>
    </lineage>
</organism>
<comment type="function">
    <text evidence="3">Myosins are actin-based motor molecules with ATPase activity essential for muscle contraction.</text>
</comment>
<comment type="subunit">
    <text evidence="6 12">Muscle myosin is a hexameric protein that consists of 2 heavy chain subunits (MHC), 2 alkali light chain subunits (MLC) and 2 regulatory light chain subunits (MLC-2) (Probable). Interacts with GCSAM (By similarity).</text>
</comment>
<comment type="subcellular location">
    <subcellularLocation>
        <location evidence="2">Cytoplasm</location>
        <location evidence="2">Myofibril</location>
    </subcellularLocation>
    <text evidence="1">Thick filaments of the myofibrils.</text>
</comment>
<comment type="domain">
    <text>The rodlike tail sequence is highly repetitive, showing cycles of a 28-residue repeat pattern composed of 4 heptapeptides, characteristic for alpha-helical coiled coils.</text>
</comment>
<comment type="domain">
    <text evidence="12">Limited proteolysis of myosin heavy chain produces 1 light meromyosin (LMM) and 1 heavy meromyosin (HMM). HMM can be further cleaved into 2 globular subfragments (S1) and 1 rod-shaped subfragment (S2).</text>
</comment>
<comment type="similarity">
    <text evidence="12">Belongs to the TRAFAC class myosin-kinesin ATPase superfamily. Myosin family.</text>
</comment>
<comment type="caution">
    <text evidence="12">Represents a conventional myosin. This protein should not be confused with the unconventional myosin-2 (MYO2) found in fungi.</text>
</comment>
<proteinExistence type="inferred from homology"/>
<dbReference type="EMBL" id="DQ227280">
    <property type="protein sequence ID" value="ABB96407.1"/>
    <property type="molecule type" value="Genomic_DNA"/>
</dbReference>
<dbReference type="RefSeq" id="NP_001070263.1">
    <property type="nucleotide sequence ID" value="NM_001076795.1"/>
</dbReference>
<dbReference type="RefSeq" id="XP_005619589.1">
    <property type="nucleotide sequence ID" value="XM_005619532.2"/>
</dbReference>
<dbReference type="RefSeq" id="XP_013968678.1">
    <property type="nucleotide sequence ID" value="XM_014113203.1"/>
</dbReference>
<dbReference type="RefSeq" id="XP_038520140.1">
    <property type="nucleotide sequence ID" value="XM_038664212.1"/>
</dbReference>
<dbReference type="RefSeq" id="XP_038520141.1">
    <property type="nucleotide sequence ID" value="XM_038664213.1"/>
</dbReference>
<dbReference type="SMR" id="Q076A7"/>
<dbReference type="FunCoup" id="Q076A7">
    <property type="interactions" value="24"/>
</dbReference>
<dbReference type="STRING" id="9615.ENSCAFP00000025869"/>
<dbReference type="PaxDb" id="9615-ENSCAFP00000025869"/>
<dbReference type="ABCD" id="Q076A7">
    <property type="antibodies" value="1 sequenced antibody"/>
</dbReference>
<dbReference type="Ensembl" id="ENSCAFT00000027819.5">
    <property type="protein sequence ID" value="ENSCAFP00000025869.4"/>
    <property type="gene ID" value="ENSCAFG00000030337.4"/>
</dbReference>
<dbReference type="Ensembl" id="ENSCAFT00030003826.1">
    <property type="protein sequence ID" value="ENSCAFP00030003397.1"/>
    <property type="gene ID" value="ENSCAFG00030002092.1"/>
</dbReference>
<dbReference type="Ensembl" id="ENSCAFT00040033469.1">
    <property type="protein sequence ID" value="ENSCAFP00040029127.1"/>
    <property type="gene ID" value="ENSCAFG00040017838.1"/>
</dbReference>
<dbReference type="Ensembl" id="ENSCAFT00845004767.1">
    <property type="protein sequence ID" value="ENSCAFP00845003815.1"/>
    <property type="gene ID" value="ENSCAFG00845002613.1"/>
</dbReference>
<dbReference type="GeneID" id="608242"/>
<dbReference type="KEGG" id="cfa:608242"/>
<dbReference type="CTD" id="4620"/>
<dbReference type="VEuPathDB" id="HostDB:ENSCAFG00845002613"/>
<dbReference type="GeneTree" id="ENSGT00940000154760"/>
<dbReference type="InParanoid" id="Q076A7"/>
<dbReference type="OrthoDB" id="312459at2759"/>
<dbReference type="Reactome" id="R-CFA-2029482">
    <property type="pathway name" value="Regulation of actin dynamics for phagocytic cup formation"/>
</dbReference>
<dbReference type="Proteomes" id="UP000002254">
    <property type="component" value="Chromosome 5"/>
</dbReference>
<dbReference type="Proteomes" id="UP000694429">
    <property type="component" value="Chromosome 5"/>
</dbReference>
<dbReference type="Proteomes" id="UP000694542">
    <property type="component" value="Chromosome 5"/>
</dbReference>
<dbReference type="Proteomes" id="UP000805418">
    <property type="component" value="Chromosome 5"/>
</dbReference>
<dbReference type="Bgee" id="ENSCAFG00000030337">
    <property type="expression patterns" value="Expressed in tongue and 26 other cell types or tissues"/>
</dbReference>
<dbReference type="GO" id="GO:0031672">
    <property type="term" value="C:A band"/>
    <property type="evidence" value="ECO:0007669"/>
    <property type="project" value="Ensembl"/>
</dbReference>
<dbReference type="GO" id="GO:0005826">
    <property type="term" value="C:actomyosin contractile ring"/>
    <property type="evidence" value="ECO:0007669"/>
    <property type="project" value="Ensembl"/>
</dbReference>
<dbReference type="GO" id="GO:0005911">
    <property type="term" value="C:cell-cell junction"/>
    <property type="evidence" value="ECO:0007669"/>
    <property type="project" value="Ensembl"/>
</dbReference>
<dbReference type="GO" id="GO:0005737">
    <property type="term" value="C:cytoplasm"/>
    <property type="evidence" value="ECO:0000318"/>
    <property type="project" value="GO_Central"/>
</dbReference>
<dbReference type="GO" id="GO:0005794">
    <property type="term" value="C:Golgi apparatus"/>
    <property type="evidence" value="ECO:0007669"/>
    <property type="project" value="Ensembl"/>
</dbReference>
<dbReference type="GO" id="GO:0032982">
    <property type="term" value="C:myosin filament"/>
    <property type="evidence" value="ECO:0000318"/>
    <property type="project" value="GO_Central"/>
</dbReference>
<dbReference type="GO" id="GO:0016460">
    <property type="term" value="C:myosin II complex"/>
    <property type="evidence" value="ECO:0000318"/>
    <property type="project" value="GO_Central"/>
</dbReference>
<dbReference type="GO" id="GO:0051015">
    <property type="term" value="F:actin filament binding"/>
    <property type="evidence" value="ECO:0000318"/>
    <property type="project" value="GO_Central"/>
</dbReference>
<dbReference type="GO" id="GO:0005524">
    <property type="term" value="F:ATP binding"/>
    <property type="evidence" value="ECO:0007669"/>
    <property type="project" value="UniProtKB-KW"/>
</dbReference>
<dbReference type="GO" id="GO:0005516">
    <property type="term" value="F:calmodulin binding"/>
    <property type="evidence" value="ECO:0007669"/>
    <property type="project" value="UniProtKB-KW"/>
</dbReference>
<dbReference type="GO" id="GO:0000146">
    <property type="term" value="F:microfilament motor activity"/>
    <property type="evidence" value="ECO:0000318"/>
    <property type="project" value="GO_Central"/>
</dbReference>
<dbReference type="GO" id="GO:0070252">
    <property type="term" value="P:actin-mediated cell contraction"/>
    <property type="evidence" value="ECO:0007669"/>
    <property type="project" value="Ensembl"/>
</dbReference>
<dbReference type="GO" id="GO:0006936">
    <property type="term" value="P:muscle contraction"/>
    <property type="evidence" value="ECO:0000318"/>
    <property type="project" value="GO_Central"/>
</dbReference>
<dbReference type="GO" id="GO:0001778">
    <property type="term" value="P:plasma membrane repair"/>
    <property type="evidence" value="ECO:0007669"/>
    <property type="project" value="Ensembl"/>
</dbReference>
<dbReference type="GO" id="GO:0014850">
    <property type="term" value="P:response to muscle activity"/>
    <property type="evidence" value="ECO:0007669"/>
    <property type="project" value="Ensembl"/>
</dbReference>
<dbReference type="FunFam" id="1.10.10.820:FF:000001">
    <property type="entry name" value="Myosin heavy chain"/>
    <property type="match status" value="1"/>
</dbReference>
<dbReference type="FunFam" id="1.20.5.340:FF:000002">
    <property type="entry name" value="Myosin heavy chain"/>
    <property type="match status" value="1"/>
</dbReference>
<dbReference type="FunFam" id="1.20.5.340:FF:000003">
    <property type="entry name" value="Myosin heavy chain"/>
    <property type="match status" value="1"/>
</dbReference>
<dbReference type="FunFam" id="1.20.5.340:FF:000004">
    <property type="entry name" value="Myosin heavy chain"/>
    <property type="match status" value="1"/>
</dbReference>
<dbReference type="FunFam" id="1.20.5.340:FF:000006">
    <property type="entry name" value="Myosin heavy chain"/>
    <property type="match status" value="1"/>
</dbReference>
<dbReference type="FunFam" id="1.20.5.340:FF:000013">
    <property type="entry name" value="Myosin heavy chain"/>
    <property type="match status" value="1"/>
</dbReference>
<dbReference type="FunFam" id="1.20.5.370:FF:000001">
    <property type="entry name" value="Myosin heavy chain"/>
    <property type="match status" value="1"/>
</dbReference>
<dbReference type="FunFam" id="1.20.5.370:FF:000002">
    <property type="entry name" value="Myosin heavy chain"/>
    <property type="match status" value="1"/>
</dbReference>
<dbReference type="FunFam" id="1.20.5.370:FF:000003">
    <property type="entry name" value="Myosin heavy chain"/>
    <property type="match status" value="1"/>
</dbReference>
<dbReference type="FunFam" id="1.20.5.370:FF:000007">
    <property type="entry name" value="Myosin heavy chain"/>
    <property type="match status" value="1"/>
</dbReference>
<dbReference type="FunFam" id="1.20.5.370:FF:000008">
    <property type="entry name" value="Myosin heavy chain"/>
    <property type="match status" value="1"/>
</dbReference>
<dbReference type="FunFam" id="1.20.5.4820:FF:000001">
    <property type="entry name" value="Myosin heavy chain"/>
    <property type="match status" value="1"/>
</dbReference>
<dbReference type="FunFam" id="1.20.58.530:FF:000001">
    <property type="entry name" value="Myosin heavy chain"/>
    <property type="match status" value="1"/>
</dbReference>
<dbReference type="FunFam" id="2.30.30.360:FF:000001">
    <property type="entry name" value="Myosin heavy chain"/>
    <property type="match status" value="1"/>
</dbReference>
<dbReference type="FunFam" id="3.40.850.10:FF:000024">
    <property type="entry name" value="Myosin heavy chain, isoform J"/>
    <property type="match status" value="1"/>
</dbReference>
<dbReference type="FunFam" id="1.20.120.720:FF:000001">
    <property type="entry name" value="Myosin heavy chain, muscle"/>
    <property type="match status" value="1"/>
</dbReference>
<dbReference type="Gene3D" id="1.10.10.820">
    <property type="match status" value="1"/>
</dbReference>
<dbReference type="Gene3D" id="1.20.5.340">
    <property type="match status" value="5"/>
</dbReference>
<dbReference type="Gene3D" id="1.20.5.370">
    <property type="match status" value="4"/>
</dbReference>
<dbReference type="Gene3D" id="1.20.5.4820">
    <property type="match status" value="1"/>
</dbReference>
<dbReference type="Gene3D" id="1.20.58.530">
    <property type="match status" value="1"/>
</dbReference>
<dbReference type="Gene3D" id="6.10.250.2420">
    <property type="match status" value="1"/>
</dbReference>
<dbReference type="Gene3D" id="3.40.850.10">
    <property type="entry name" value="Kinesin motor domain"/>
    <property type="match status" value="1"/>
</dbReference>
<dbReference type="Gene3D" id="2.30.30.360">
    <property type="entry name" value="Myosin S1 fragment, N-terminal"/>
    <property type="match status" value="1"/>
</dbReference>
<dbReference type="Gene3D" id="1.20.120.720">
    <property type="entry name" value="Myosin VI head, motor domain, U50 subdomain"/>
    <property type="match status" value="1"/>
</dbReference>
<dbReference type="InterPro" id="IPR000048">
    <property type="entry name" value="IQ_motif_EF-hand-BS"/>
</dbReference>
<dbReference type="InterPro" id="IPR036961">
    <property type="entry name" value="Kinesin_motor_dom_sf"/>
</dbReference>
<dbReference type="InterPro" id="IPR001609">
    <property type="entry name" value="Myosin_head_motor_dom-like"/>
</dbReference>
<dbReference type="InterPro" id="IPR004009">
    <property type="entry name" value="Myosin_N"/>
</dbReference>
<dbReference type="InterPro" id="IPR008989">
    <property type="entry name" value="Myosin_S1_N"/>
</dbReference>
<dbReference type="InterPro" id="IPR002928">
    <property type="entry name" value="Myosin_tail"/>
</dbReference>
<dbReference type="InterPro" id="IPR027417">
    <property type="entry name" value="P-loop_NTPase"/>
</dbReference>
<dbReference type="InterPro" id="IPR014751">
    <property type="entry name" value="XRCC4-like_C"/>
</dbReference>
<dbReference type="PANTHER" id="PTHR45615">
    <property type="entry name" value="MYOSIN HEAVY CHAIN, NON-MUSCLE"/>
    <property type="match status" value="1"/>
</dbReference>
<dbReference type="PANTHER" id="PTHR45615:SF39">
    <property type="entry name" value="MYOSIN-2"/>
    <property type="match status" value="1"/>
</dbReference>
<dbReference type="Pfam" id="PF00063">
    <property type="entry name" value="Myosin_head"/>
    <property type="match status" value="1"/>
</dbReference>
<dbReference type="Pfam" id="PF02736">
    <property type="entry name" value="Myosin_N"/>
    <property type="match status" value="1"/>
</dbReference>
<dbReference type="Pfam" id="PF01576">
    <property type="entry name" value="Myosin_tail_1"/>
    <property type="match status" value="1"/>
</dbReference>
<dbReference type="PRINTS" id="PR00193">
    <property type="entry name" value="MYOSINHEAVY"/>
</dbReference>
<dbReference type="SMART" id="SM00015">
    <property type="entry name" value="IQ"/>
    <property type="match status" value="2"/>
</dbReference>
<dbReference type="SMART" id="SM00242">
    <property type="entry name" value="MYSc"/>
    <property type="match status" value="1"/>
</dbReference>
<dbReference type="SUPFAM" id="SSF90257">
    <property type="entry name" value="Myosin rod fragments"/>
    <property type="match status" value="5"/>
</dbReference>
<dbReference type="SUPFAM" id="SSF52540">
    <property type="entry name" value="P-loop containing nucleoside triphosphate hydrolases"/>
    <property type="match status" value="1"/>
</dbReference>
<dbReference type="SUPFAM" id="SSF57997">
    <property type="entry name" value="Tropomyosin"/>
    <property type="match status" value="1"/>
</dbReference>
<dbReference type="PROSITE" id="PS50096">
    <property type="entry name" value="IQ"/>
    <property type="match status" value="1"/>
</dbReference>
<dbReference type="PROSITE" id="PS51456">
    <property type="entry name" value="MYOSIN_MOTOR"/>
    <property type="match status" value="1"/>
</dbReference>
<dbReference type="PROSITE" id="PS51844">
    <property type="entry name" value="SH3_LIKE"/>
    <property type="match status" value="1"/>
</dbReference>
<keyword id="KW-0009">Actin-binding</keyword>
<keyword id="KW-0067">ATP-binding</keyword>
<keyword id="KW-0112">Calmodulin-binding</keyword>
<keyword id="KW-0175">Coiled coil</keyword>
<keyword id="KW-0963">Cytoplasm</keyword>
<keyword id="KW-0488">Methylation</keyword>
<keyword id="KW-0505">Motor protein</keyword>
<keyword id="KW-0514">Muscle protein</keyword>
<keyword id="KW-0518">Myosin</keyword>
<keyword id="KW-0547">Nucleotide-binding</keyword>
<keyword id="KW-0597">Phosphoprotein</keyword>
<keyword id="KW-1185">Reference proteome</keyword>
<keyword id="KW-0787">Thick filament</keyword>
<reference key="1">
    <citation type="submission" date="2005-09" db="EMBL/GenBank/DDBJ databases">
        <title>Canine myosin heavy chain expression.</title>
        <authorList>
            <person name="Maccatrozzo L."/>
            <person name="Patruno M."/>
            <person name="Mascarello F."/>
            <person name="Reggiani C."/>
        </authorList>
    </citation>
    <scope>NUCLEOTIDE SEQUENCE [GENOMIC DNA]</scope>
</reference>
<name>MYH2_CANLF</name>
<evidence type="ECO:0000250" key="1"/>
<evidence type="ECO:0000250" key="2">
    <source>
        <dbReference type="UniProtKB" id="G3UW82"/>
    </source>
</evidence>
<evidence type="ECO:0000250" key="3">
    <source>
        <dbReference type="UniProtKB" id="P12883"/>
    </source>
</evidence>
<evidence type="ECO:0000250" key="4">
    <source>
        <dbReference type="UniProtKB" id="Q28641"/>
    </source>
</evidence>
<evidence type="ECO:0000250" key="5">
    <source>
        <dbReference type="UniProtKB" id="Q29RW1"/>
    </source>
</evidence>
<evidence type="ECO:0000250" key="6">
    <source>
        <dbReference type="UniProtKB" id="Q9UKX2"/>
    </source>
</evidence>
<evidence type="ECO:0000255" key="7"/>
<evidence type="ECO:0000255" key="8">
    <source>
        <dbReference type="PROSITE-ProRule" id="PRU00116"/>
    </source>
</evidence>
<evidence type="ECO:0000255" key="9">
    <source>
        <dbReference type="PROSITE-ProRule" id="PRU00782"/>
    </source>
</evidence>
<evidence type="ECO:0000255" key="10">
    <source>
        <dbReference type="PROSITE-ProRule" id="PRU01190"/>
    </source>
</evidence>
<evidence type="ECO:0000256" key="11">
    <source>
        <dbReference type="SAM" id="MobiDB-lite"/>
    </source>
</evidence>
<evidence type="ECO:0000305" key="12"/>
<accession>Q076A7</accession>
<sequence>MSSDQEMAIFGEAAPYLRKSEKERIEAQNRPFDAKTSVFVAEPKESFVKGTVQSREGGKVTVKTEAGATLTVKEDQVFPMNPPKYDKIEDMAMMTHLHEPAVLYNLKERYAAWMIYTYSGLFCVTVNPYKWLPVYNPEVVTAYRGKKRQEAPPHIFSISDNAYQFMLTDRENQSILITGESGAGKTVNTKRVIQYFATIAVTGEKKKEEATSGKMQGTLEDQIISANPLLEAFGNAKTVRNDNSSRFGKFIRIHFGTTGKLASADIETYLLEKSRVTFQLKAERSYHIFYQITSNKKPELIEMLLITTNPYDYPFVSQGEISVASIDDQEELIATDSAIDILGFTNEEKVSIYKLTGAVMHYGNLKFKQKQREEQAEPDGTEVADKAAYLQSLNSADLLKALCYPRVKVGNEFVTKGQTVEQVTNAVGALAKAVYEKMFLWMVTRINQQLDTKQPRQYFIGVLDIAGFEIFDFNSLEQLCINFTNEKLQQFFNHHMFVLEQEEYKKEGIEWTFIDFGMDLAACIELIEKPMGIFSILEEECMFPKATDTSFKNKLYEQHLGKSANFQKPKVVKGKAEAHFSLIHYAGVVDYNITGWLDKNKDPLNETVVGLYQKSSMKTLAYLFSGAQTAEAEASGGAKKGGKKKGSSFQTVSALFRENLNKLMTNLRSTHPHFVRCIIPNETKTPGAMEHELVLHQLRCNGVLEGIRICRKGFPSRILYADFKQRYKVLNASAIPEGQFIDSKKASEKLLASIDIDHTQYKFGHTKVFFKAGLLGLLEEMRDDKLAQLITRTQARCRGFLARVEYQKMVERRESIFCIQYNIRAFMNVKHWPWMKLFFKIKPLLKSAETEKEMATMKEEFQKTKDELAKSEAKRKELEEKMVTLLKEKNDLQLQVQAEAEGLADAEERCDQLIKTKIQLEAKIKEVTERAEDEEEINAELTAKKRKLEDECSELKKDIDDLELTLAKVEKEKHATENKVKNLTEEMAGLDETIAKLTKEKKALQEAHQQTLDDLQAEEDKVNTLTKAKIKLEQQVDDLEGSLEQEKKLRMDLERAKRKLEGDLKLAQESIMDIENEKQQLDEKLKKKEFEMSNLQSKIEDEQALGIQLQKKIKELQARIEELEEEIEAERASRAKAEKQRSDLSRELEEISERLEEAGGATSAQIEMNKKREAEFQKMRRDLEEATLQHEATAATLRKKHADSVAELGEQIDNLQRVKQKLEKEKSEMKMEIDDLASNVETVSKAKGNLEKMCRTLEDQVSELKSKEEEQQRLINDLTTQRGRLQTESGEFSRQLDEKEALVSQLSRGKLAFTQQIEELKRQLEEEIKAKNALAHALQSSRHDCDLLREQYEEEQESKAELQRALSKANSEVAQWRTKYETDAIQRTEELEEAKKKLAQRLQAAEEHVEAVNAKCASLEKTKQRLQNEVEDLMLDVERTNAACAALDKKQRNFDKILAEWKQKYEETHAELEASQKEARSLGTELFKMKNAYEESLDQLETLKRENKNLQQEISDLTEQIAEGGKRIHELEKIKKQVEQEKSEIQAALEEAEASLEHEEGKILRIQLELNQVKSEIDRKIAEKDEEIDQLKRNHIRVVESMQTMLDAEIRSRNDAIRLKKKMEGDLNEMEIQLNHANRMAAEALRNYRNTQGILKDTQIHLDDALRGQEDLKEQLAMVERRANLLQAEIEELRATLEQTERSRKIAEQELLDASERVQLLHTQNTSLINTKKKLETDISQIQGEMEDIIQEARNAEEKAKKAITDAAMMAEELKKEQDTSAHLERMKKNMEQTVKDLQHRLDEAEQLALKGGKKQIQKLEARVRELEGEVESEQKRNAEAVKGLRKHERRVKELTYQTEEDRKNILRLQDLVDKLQAKVKSYKRQAEEAEEQSNTNLSKFRKLQHELEEAEERADIAESQVNKLRVKSREVHTKVISEE</sequence>